<comment type="function">
    <text evidence="5">Monooxygenase able to convert a wide range of ketones to the corresponding esters or lactones via a Baeyer-Villiger oxidation reaction. Can act on long-chain aliphatic ketones (2-hexanone to 2-dodecanone) and on aromatic ketones (phenylacetone and benzylacetone). Is also able to catalyze enantioselective sulfoxidation of methyl-p-tolylsulfide. In vivo, likely functions as a BVMO, but the exact nature of the physiological substrate(s) remains to be established.</text>
</comment>
<comment type="function">
    <text evidence="2 3 4 5">Is responsible for the activation of several thiocarbamide-containing pro-drugs into cytotoxic species. Thus, catalyzes the oxidation of the antitubercular pro-drug ethionamide (ETH) to the corresponding sulfoxide, which is further oxidized by EthA to 2-ethyl-4-amidopyridine, presumably via the unstable doubly oxidized sulfinic acid intermediate; the final metabolite 2-ethyl-4-amidopyridine has no antitubercular activity, so the cytotoxic species is a metabolite intermediate formed by EthA. Also oxidizes thiacetazone (TAC), thiobenzamide, and isothionicotinamide and therefore is probably responsible, as suggested by the observation of crossover resistance, for the oxidative activation of these other thioamide antitubercular drugs.</text>
</comment>
<comment type="catalytic activity">
    <reaction evidence="4 5">
        <text>ethionamide + NADPH + O2 + H(+) = ethionamide S-oxide + NADP(+) + H2O</text>
        <dbReference type="Rhea" id="RHEA:47616"/>
        <dbReference type="ChEBI" id="CHEBI:4885"/>
        <dbReference type="ChEBI" id="CHEBI:15377"/>
        <dbReference type="ChEBI" id="CHEBI:15378"/>
        <dbReference type="ChEBI" id="CHEBI:15379"/>
        <dbReference type="ChEBI" id="CHEBI:57783"/>
        <dbReference type="ChEBI" id="CHEBI:58349"/>
        <dbReference type="ChEBI" id="CHEBI:87805"/>
    </reaction>
</comment>
<comment type="cofactor">
    <cofactor evidence="4 5">
        <name>FAD</name>
        <dbReference type="ChEBI" id="CHEBI:57692"/>
    </cofactor>
    <text evidence="4 5">Binds 1 FAD per subunit.</text>
</comment>
<comment type="activity regulation">
    <text evidence="5">Activity can be increased by one order of magnitude by adding bovine serum albumin in vitro. This result suggests that the enzyme is activated in vivo by protein-protein or interactions with other cellular components.</text>
</comment>
<comment type="biophysicochemical properties">
    <kinetics>
        <KM evidence="4">194 uM for ethionamide</KM>
        <KM evidence="5">340 uM for ethionamide</KM>
        <KM evidence="5">10 uM for NADPH</KM>
        <KM evidence="5">61 uM for phenylacetone</KM>
        <KM evidence="5">520 uM for benzylacetone</KM>
        <KM evidence="5">200 uM for 2-dodecanone</KM>
        <text evidence="5">kcat is 0.027 sec(-1) with ethionamide as substrate. kcat is 0.017 sec(-1) with phenylacetone as substrate. kcat is 0.021 sec(-1) with benzylacetone as substrate. kcat is 0.023 sec(-1) with 2-dodecanone as substrate.</text>
    </kinetics>
</comment>
<comment type="subunit">
    <text evidence="5">Exists as a mixture of relatively large homooligomers ranging from 200 to 600 kDa.</text>
</comment>
<comment type="subcellular location">
    <subcellularLocation>
        <location evidence="9">Cell membrane</location>
    </subcellularLocation>
    <text evidence="9">Is most likely membrane-associated.</text>
</comment>
<comment type="induction">
    <text evidence="2">Repressed by the transcriptional regulator EthR.</text>
</comment>
<comment type="disruption phenotype">
    <text evidence="3">Inactivation of this gene leads to a strong resistance to ETH.</text>
</comment>
<comment type="similarity">
    <text evidence="11">Belongs to the FAD-binding monooxygenase family.</text>
</comment>
<organism>
    <name type="scientific">Mycobacterium tuberculosis (strain ATCC 25618 / H37Rv)</name>
    <dbReference type="NCBI Taxonomy" id="83332"/>
    <lineage>
        <taxon>Bacteria</taxon>
        <taxon>Bacillati</taxon>
        <taxon>Actinomycetota</taxon>
        <taxon>Actinomycetes</taxon>
        <taxon>Mycobacteriales</taxon>
        <taxon>Mycobacteriaceae</taxon>
        <taxon>Mycobacterium</taxon>
        <taxon>Mycobacterium tuberculosis complex</taxon>
    </lineage>
</organism>
<name>ETHA_MYCTU</name>
<accession>P9WNF9</accession>
<accession>L0TDR6</accession>
<accession>P96223</accession>
<accession>Q7D4Q8</accession>
<reference key="1">
    <citation type="journal article" date="1998" name="Nature">
        <title>Deciphering the biology of Mycobacterium tuberculosis from the complete genome sequence.</title>
        <authorList>
            <person name="Cole S.T."/>
            <person name="Brosch R."/>
            <person name="Parkhill J."/>
            <person name="Garnier T."/>
            <person name="Churcher C.M."/>
            <person name="Harris D.E."/>
            <person name="Gordon S.V."/>
            <person name="Eiglmeier K."/>
            <person name="Gas S."/>
            <person name="Barry C.E. III"/>
            <person name="Tekaia F."/>
            <person name="Badcock K."/>
            <person name="Basham D."/>
            <person name="Brown D."/>
            <person name="Chillingworth T."/>
            <person name="Connor R."/>
            <person name="Davies R.M."/>
            <person name="Devlin K."/>
            <person name="Feltwell T."/>
            <person name="Gentles S."/>
            <person name="Hamlin N."/>
            <person name="Holroyd S."/>
            <person name="Hornsby T."/>
            <person name="Jagels K."/>
            <person name="Krogh A."/>
            <person name="McLean J."/>
            <person name="Moule S."/>
            <person name="Murphy L.D."/>
            <person name="Oliver S."/>
            <person name="Osborne J."/>
            <person name="Quail M.A."/>
            <person name="Rajandream M.A."/>
            <person name="Rogers J."/>
            <person name="Rutter S."/>
            <person name="Seeger K."/>
            <person name="Skelton S."/>
            <person name="Squares S."/>
            <person name="Squares R."/>
            <person name="Sulston J.E."/>
            <person name="Taylor K."/>
            <person name="Whitehead S."/>
            <person name="Barrell B.G."/>
        </authorList>
    </citation>
    <scope>NUCLEOTIDE SEQUENCE [LARGE SCALE GENOMIC DNA]</scope>
    <source>
        <strain>ATCC 25618 / H37Rv</strain>
    </source>
</reference>
<reference key="2">
    <citation type="journal article" date="2000" name="J. Biol. Chem.">
        <title>Activation of the pro-drug ethionamide is regulated in mycobacteria.</title>
        <authorList>
            <person name="Baulard A.R."/>
            <person name="Betts J.C."/>
            <person name="Engohang-Ndong J."/>
            <person name="Quan S."/>
            <person name="McAdam R.A."/>
            <person name="Brennan P.J."/>
            <person name="Locht C."/>
            <person name="Besra G.S."/>
        </authorList>
    </citation>
    <scope>FUNCTION AS AN ACTIVATOR OF ETHIONAMIDE</scope>
    <scope>TRANSCRIPTIONAL REGULATION</scope>
    <source>
        <strain>ATCC 25618 / H37Rv</strain>
    </source>
</reference>
<reference key="3">
    <citation type="journal article" date="2000" name="Proc. Natl. Acad. Sci. U.S.A.">
        <title>Ethionamide activation and sensitivity in multidrug-resistant Mycobacterium tuberculosis.</title>
        <authorList>
            <person name="DeBarber A.E."/>
            <person name="Mdluli K."/>
            <person name="Bosman M."/>
            <person name="Bekker L.G."/>
            <person name="Barry C.E. III"/>
        </authorList>
    </citation>
    <scope>FUNCTION AS AN ACTIVATOR OF ETHIONAMIDE</scope>
    <scope>DISRUPTION PHENOTYPE</scope>
</reference>
<reference key="4">
    <citation type="journal article" date="2002" name="J. Biol. Chem.">
        <title>The antituberculosis drug ethionamide is activated by a flavoprotein monooxygenase.</title>
        <authorList>
            <person name="Vannelli T.A."/>
            <person name="Dykman A."/>
            <person name="Ortiz de Montellano P.R."/>
        </authorList>
    </citation>
    <scope>FUNCTION</scope>
    <scope>CATALYTIC ACTIVITY</scope>
    <scope>BIOPHYSICOCHEMICAL PROPERTIES</scope>
    <scope>COFACTOR</scope>
    <scope>SUBSTRATE SPECIFICITY</scope>
    <scope>SUBCELLULAR LOCATION</scope>
    <source>
        <strain>ATCC 25618 / H37Rv</strain>
    </source>
</reference>
<reference key="5">
    <citation type="journal article" date="2004" name="J. Biol. Chem.">
        <title>The prodrug activator EtaA from Mycobacterium tuberculosis is a Baeyer-Villiger monooxygenase.</title>
        <authorList>
            <person name="Fraaije M.W."/>
            <person name="Kamerbeek N.M."/>
            <person name="Heidekamp A.J."/>
            <person name="Fortin R."/>
            <person name="Janssen D.B."/>
        </authorList>
    </citation>
    <scope>FUNCTION</scope>
    <scope>CATALYTIC ACTIVITY</scope>
    <scope>COFACTOR</scope>
    <scope>SUBSTRATE SPECIFICITY</scope>
    <scope>BIOPHYSICOCHEMICAL PROPERTIES</scope>
    <scope>ACTIVITY REGULATION</scope>
    <scope>SUBUNIT</scope>
    <source>
        <strain>ATCC 25618 / H37Rv</strain>
    </source>
</reference>
<reference key="6">
    <citation type="journal article" date="2009" name="Nat. Med.">
        <title>Synthetic EthR inhibitors boost antituberculous activity of ethionamide.</title>
        <authorList>
            <person name="Willand N."/>
            <person name="Dirie B."/>
            <person name="Carette X."/>
            <person name="Bifani P."/>
            <person name="Singhal A."/>
            <person name="Desroses M."/>
            <person name="Leroux F."/>
            <person name="Willery E."/>
            <person name="Mathys V."/>
            <person name="Deprez-Poulain R."/>
            <person name="Delcroix G."/>
            <person name="Frenois F."/>
            <person name="Aumercier M."/>
            <person name="Locht C."/>
            <person name="Villeret V."/>
            <person name="Deprez B."/>
            <person name="Baulard A.R."/>
        </authorList>
    </citation>
    <scope>MUTAGENESIS OF TYR-84</scope>
    <source>
        <strain>ATCC 25618 / H37Rv</strain>
    </source>
</reference>
<reference key="7">
    <citation type="journal article" date="2011" name="Mol. Cell. Proteomics">
        <title>Proteogenomic analysis of Mycobacterium tuberculosis by high resolution mass spectrometry.</title>
        <authorList>
            <person name="Kelkar D.S."/>
            <person name="Kumar D."/>
            <person name="Kumar P."/>
            <person name="Balakrishnan L."/>
            <person name="Muthusamy B."/>
            <person name="Yadav A.K."/>
            <person name="Shrivastava P."/>
            <person name="Marimuthu A."/>
            <person name="Anand S."/>
            <person name="Sundaram H."/>
            <person name="Kingsbury R."/>
            <person name="Harsha H.C."/>
            <person name="Nair B."/>
            <person name="Prasad T.S."/>
            <person name="Chauhan D.S."/>
            <person name="Katoch K."/>
            <person name="Katoch V.M."/>
            <person name="Kumar P."/>
            <person name="Chaerkady R."/>
            <person name="Ramachandran S."/>
            <person name="Dash D."/>
            <person name="Pandey A."/>
        </authorList>
    </citation>
    <scope>IDENTIFICATION BY MASS SPECTROMETRY [LARGE SCALE ANALYSIS]</scope>
    <source>
        <strain>ATCC 25618 / H37Rv</strain>
    </source>
</reference>
<proteinExistence type="evidence at protein level"/>
<feature type="chain" id="PRO_0000398581" description="FAD-containing monooxygenase EthA">
    <location>
        <begin position="1"/>
        <end position="489"/>
    </location>
</feature>
<feature type="binding site" evidence="1">
    <location>
        <position position="15"/>
    </location>
    <ligand>
        <name>FAD</name>
        <dbReference type="ChEBI" id="CHEBI:57692"/>
    </ligand>
</feature>
<feature type="binding site" evidence="1">
    <location>
        <position position="36"/>
    </location>
    <ligand>
        <name>FAD</name>
        <dbReference type="ChEBI" id="CHEBI:57692"/>
    </ligand>
</feature>
<feature type="binding site" evidence="1">
    <location>
        <begin position="44"/>
        <end position="47"/>
    </location>
    <ligand>
        <name>FAD</name>
        <dbReference type="ChEBI" id="CHEBI:57692"/>
    </ligand>
</feature>
<feature type="binding site" evidence="1">
    <location>
        <begin position="54"/>
        <end position="56"/>
    </location>
    <ligand>
        <name>NADP(+)</name>
        <dbReference type="ChEBI" id="CHEBI:58349"/>
    </ligand>
</feature>
<feature type="binding site" evidence="1">
    <location>
        <position position="56"/>
    </location>
    <ligand>
        <name>FAD</name>
        <dbReference type="ChEBI" id="CHEBI:57692"/>
    </ligand>
</feature>
<feature type="binding site" evidence="1">
    <location>
        <position position="104"/>
    </location>
    <ligand>
        <name>FAD</name>
        <dbReference type="ChEBI" id="CHEBI:57692"/>
    </ligand>
</feature>
<feature type="binding site" evidence="1">
    <location>
        <begin position="183"/>
        <end position="189"/>
    </location>
    <ligand>
        <name>NADP(+)</name>
        <dbReference type="ChEBI" id="CHEBI:58349"/>
    </ligand>
</feature>
<feature type="binding site" evidence="1">
    <location>
        <begin position="207"/>
        <end position="208"/>
    </location>
    <ligand>
        <name>NADP(+)</name>
        <dbReference type="ChEBI" id="CHEBI:58349"/>
    </ligand>
</feature>
<feature type="site" description="Transition state stabilizer" evidence="1">
    <location>
        <position position="292"/>
    </location>
</feature>
<feature type="mutagenesis site" description="ETH-resistant." evidence="6">
    <original>Y</original>
    <variation>C</variation>
    <location>
        <position position="84"/>
    </location>
</feature>
<sequence length="489" mass="55326">MTEHLDVVIVGAGISGVSAAWHLQDRCPTKSYAILEKRESMGGTWDLFRYPGIRSDSDMYTLGFRFRPWTGRQAIADGKPILEYVKSTAAMYGIDRHIRFHHKVISADWSTAENRWTVHIQSHGTLSALTCEFLFLCSGYYNYDEGYSPRFAGSEDFVGPIIHPQHWPEDLDYDAKNIVVIGSGATAVTLVPALADSGAKHVTMLQRSPTYIVSQPDRDGIAEKLNRWLPETMAYTAVRWKNVLRQAAVYSACQKWPRRMRKMFLSLIQRQLPEGYDVRKHFGPHYNPWDQRLCLVPNGDLFRAIRHGKVEVVTDTIERFTATGIRLNSGRELPADIIITATGLNLQLFGGATATIDGQQVDITTTMAYKGMMLSGIPNMAYTVGYTNASWTLKADLVSEFVCRLLNYMDDNGFDTVVVERPGSDVEERPFMEFTPGYVLRSLDELPKQGSRTPWRLNQNYLRDIRLIRRGKIDDEGLRFAKRPAPVGV</sequence>
<evidence type="ECO:0000250" key="1">
    <source>
        <dbReference type="UniProtKB" id="Q47PU3"/>
    </source>
</evidence>
<evidence type="ECO:0000269" key="2">
    <source>
    </source>
</evidence>
<evidence type="ECO:0000269" key="3">
    <source>
    </source>
</evidence>
<evidence type="ECO:0000269" key="4">
    <source>
    </source>
</evidence>
<evidence type="ECO:0000269" key="5">
    <source>
    </source>
</evidence>
<evidence type="ECO:0000269" key="6">
    <source>
    </source>
</evidence>
<evidence type="ECO:0000303" key="7">
    <source>
    </source>
</evidence>
<evidence type="ECO:0000303" key="8">
    <source>
    </source>
</evidence>
<evidence type="ECO:0000303" key="9">
    <source>
    </source>
</evidence>
<evidence type="ECO:0000303" key="10">
    <source>
    </source>
</evidence>
<evidence type="ECO:0000305" key="11"/>
<dbReference type="EC" id="1.14.13.-" evidence="5"/>
<dbReference type="EMBL" id="AL123456">
    <property type="protein sequence ID" value="CCP46683.1"/>
    <property type="molecule type" value="Genomic_DNA"/>
</dbReference>
<dbReference type="PIR" id="C70655">
    <property type="entry name" value="C70655"/>
</dbReference>
<dbReference type="RefSeq" id="NP_218371.1">
    <property type="nucleotide sequence ID" value="NC_000962.3"/>
</dbReference>
<dbReference type="RefSeq" id="WP_003899731.1">
    <property type="nucleotide sequence ID" value="NZ_NVQJ01000057.1"/>
</dbReference>
<dbReference type="SMR" id="P9WNF9"/>
<dbReference type="FunCoup" id="P9WNF9">
    <property type="interactions" value="37"/>
</dbReference>
<dbReference type="STRING" id="83332.Rv3854c"/>
<dbReference type="PaxDb" id="83332-Rv3854c"/>
<dbReference type="DNASU" id="886175"/>
<dbReference type="GeneID" id="886175"/>
<dbReference type="KEGG" id="mtu:Rv3854c"/>
<dbReference type="KEGG" id="mtv:RVBD_3854c"/>
<dbReference type="TubercuList" id="Rv3854c"/>
<dbReference type="eggNOG" id="COG2072">
    <property type="taxonomic scope" value="Bacteria"/>
</dbReference>
<dbReference type="InParanoid" id="P9WNF9"/>
<dbReference type="OrthoDB" id="5168853at2"/>
<dbReference type="PhylomeDB" id="P9WNF9"/>
<dbReference type="BioCyc" id="MetaCyc:G185E-8152-MONOMER"/>
<dbReference type="SABIO-RK" id="P9WNF9"/>
<dbReference type="Proteomes" id="UP000001584">
    <property type="component" value="Chromosome"/>
</dbReference>
<dbReference type="GO" id="GO:0005829">
    <property type="term" value="C:cytosol"/>
    <property type="evidence" value="ECO:0007005"/>
    <property type="project" value="MTBBASE"/>
</dbReference>
<dbReference type="GO" id="GO:0009274">
    <property type="term" value="C:peptidoglycan-based cell wall"/>
    <property type="evidence" value="ECO:0007005"/>
    <property type="project" value="UniProtKB"/>
</dbReference>
<dbReference type="GO" id="GO:0005886">
    <property type="term" value="C:plasma membrane"/>
    <property type="evidence" value="ECO:0000314"/>
    <property type="project" value="MTBBASE"/>
</dbReference>
<dbReference type="GO" id="GO:0071949">
    <property type="term" value="F:FAD binding"/>
    <property type="evidence" value="ECO:0000314"/>
    <property type="project" value="UniProtKB"/>
</dbReference>
<dbReference type="GO" id="GO:0050660">
    <property type="term" value="F:flavin adenine dinucleotide binding"/>
    <property type="evidence" value="ECO:0000314"/>
    <property type="project" value="UniProtKB"/>
</dbReference>
<dbReference type="GO" id="GO:0004499">
    <property type="term" value="F:N,N-dimethylaniline monooxygenase activity"/>
    <property type="evidence" value="ECO:0000314"/>
    <property type="project" value="MTBBASE"/>
</dbReference>
<dbReference type="GO" id="GO:0070402">
    <property type="term" value="F:NADPH binding"/>
    <property type="evidence" value="ECO:0000314"/>
    <property type="project" value="UniProtKB"/>
</dbReference>
<dbReference type="GO" id="GO:0016709">
    <property type="term" value="F:oxidoreductase activity, acting on paired donors, with incorporation or reduction of molecular oxygen, NAD(P)H as one donor, and incorporation of one atom of oxygen"/>
    <property type="evidence" value="ECO:0000314"/>
    <property type="project" value="UniProtKB"/>
</dbReference>
<dbReference type="GO" id="GO:0033776">
    <property type="term" value="F:phenylacetone monooxygenase activity"/>
    <property type="evidence" value="ECO:0000314"/>
    <property type="project" value="UniProtKB"/>
</dbReference>
<dbReference type="GO" id="GO:0006805">
    <property type="term" value="P:xenobiotic metabolic process"/>
    <property type="evidence" value="ECO:0000314"/>
    <property type="project" value="UniProtKB"/>
</dbReference>
<dbReference type="FunFam" id="3.50.50.60:FF:000213">
    <property type="entry name" value="FAD-containing monooxygenase EthA"/>
    <property type="match status" value="1"/>
</dbReference>
<dbReference type="FunFam" id="3.50.50.60:FF:000228">
    <property type="entry name" value="FAD-containing monooxygenase EthA"/>
    <property type="match status" value="1"/>
</dbReference>
<dbReference type="Gene3D" id="3.50.50.60">
    <property type="entry name" value="FAD/NAD(P)-binding domain"/>
    <property type="match status" value="3"/>
</dbReference>
<dbReference type="InterPro" id="IPR051820">
    <property type="entry name" value="FAD-binding_MO"/>
</dbReference>
<dbReference type="InterPro" id="IPR036188">
    <property type="entry name" value="FAD/NAD-bd_sf"/>
</dbReference>
<dbReference type="InterPro" id="IPR020946">
    <property type="entry name" value="Flavin_mOase-like"/>
</dbReference>
<dbReference type="PANTHER" id="PTHR43872">
    <property type="entry name" value="MONOOXYGENASE, PUTATIVE (AFU_ORTHOLOGUE AFUA_8G02570)-RELATED"/>
    <property type="match status" value="1"/>
</dbReference>
<dbReference type="PANTHER" id="PTHR43872:SF1">
    <property type="entry name" value="MONOOXYGENASE, PUTATIVE (AFU_ORTHOLOGUE AFUA_8G02570)-RELATED"/>
    <property type="match status" value="1"/>
</dbReference>
<dbReference type="Pfam" id="PF00743">
    <property type="entry name" value="FMO-like"/>
    <property type="match status" value="1"/>
</dbReference>
<dbReference type="Pfam" id="PF13450">
    <property type="entry name" value="NAD_binding_8"/>
    <property type="match status" value="1"/>
</dbReference>
<dbReference type="SUPFAM" id="SSF51905">
    <property type="entry name" value="FAD/NAD(P)-binding domain"/>
    <property type="match status" value="1"/>
</dbReference>
<protein>
    <recommendedName>
        <fullName evidence="9">FAD-containing monooxygenase EthA</fullName>
        <ecNumber evidence="5">1.14.13.-</ecNumber>
    </recommendedName>
    <alternativeName>
        <fullName evidence="10">Baeyer-Villiger monooxygenase EtaA</fullName>
        <shortName evidence="10">BVMO</shortName>
    </alternativeName>
    <alternativeName>
        <fullName evidence="10">Prodrug activator EtaA</fullName>
    </alternativeName>
</protein>
<keyword id="KW-1003">Cell membrane</keyword>
<keyword id="KW-0274">FAD</keyword>
<keyword id="KW-0285">Flavoprotein</keyword>
<keyword id="KW-0472">Membrane</keyword>
<keyword id="KW-0503">Monooxygenase</keyword>
<keyword id="KW-0521">NADP</keyword>
<keyword id="KW-0560">Oxidoreductase</keyword>
<keyword id="KW-1185">Reference proteome</keyword>
<gene>
    <name evidence="7" type="primary">ethA</name>
    <name evidence="8 9" type="synonym">etaA</name>
    <name type="ordered locus">Rv3854c</name>
</gene>